<reference key="1">
    <citation type="journal article" date="2003" name="Nat. Genet.">
        <title>Comparative analysis of the genome sequences of Bordetella pertussis, Bordetella parapertussis and Bordetella bronchiseptica.</title>
        <authorList>
            <person name="Parkhill J."/>
            <person name="Sebaihia M."/>
            <person name="Preston A."/>
            <person name="Murphy L.D."/>
            <person name="Thomson N.R."/>
            <person name="Harris D.E."/>
            <person name="Holden M.T.G."/>
            <person name="Churcher C.M."/>
            <person name="Bentley S.D."/>
            <person name="Mungall K.L."/>
            <person name="Cerdeno-Tarraga A.-M."/>
            <person name="Temple L."/>
            <person name="James K.D."/>
            <person name="Harris B."/>
            <person name="Quail M.A."/>
            <person name="Achtman M."/>
            <person name="Atkin R."/>
            <person name="Baker S."/>
            <person name="Basham D."/>
            <person name="Bason N."/>
            <person name="Cherevach I."/>
            <person name="Chillingworth T."/>
            <person name="Collins M."/>
            <person name="Cronin A."/>
            <person name="Davis P."/>
            <person name="Doggett J."/>
            <person name="Feltwell T."/>
            <person name="Goble A."/>
            <person name="Hamlin N."/>
            <person name="Hauser H."/>
            <person name="Holroyd S."/>
            <person name="Jagels K."/>
            <person name="Leather S."/>
            <person name="Moule S."/>
            <person name="Norberczak H."/>
            <person name="O'Neil S."/>
            <person name="Ormond D."/>
            <person name="Price C."/>
            <person name="Rabbinowitsch E."/>
            <person name="Rutter S."/>
            <person name="Sanders M."/>
            <person name="Saunders D."/>
            <person name="Seeger K."/>
            <person name="Sharp S."/>
            <person name="Simmonds M."/>
            <person name="Skelton J."/>
            <person name="Squares R."/>
            <person name="Squares S."/>
            <person name="Stevens K."/>
            <person name="Unwin L."/>
            <person name="Whitehead S."/>
            <person name="Barrell B.G."/>
            <person name="Maskell D.J."/>
        </authorList>
    </citation>
    <scope>NUCLEOTIDE SEQUENCE [LARGE SCALE GENOMIC DNA]</scope>
    <source>
        <strain>Tohama I / ATCC BAA-589 / NCTC 13251</strain>
    </source>
</reference>
<dbReference type="EC" id="2.7.1.24" evidence="1"/>
<dbReference type="EMBL" id="BX640422">
    <property type="protein sequence ID" value="CAE44072.1"/>
    <property type="molecule type" value="Genomic_DNA"/>
</dbReference>
<dbReference type="RefSeq" id="NP_882315.1">
    <property type="nucleotide sequence ID" value="NC_002929.2"/>
</dbReference>
<dbReference type="SMR" id="Q7VSV5"/>
<dbReference type="STRING" id="257313.BP3817"/>
<dbReference type="PaxDb" id="257313-BP3817"/>
<dbReference type="KEGG" id="bpe:BP3817"/>
<dbReference type="PATRIC" id="fig|257313.5.peg.4125"/>
<dbReference type="eggNOG" id="COG0237">
    <property type="taxonomic scope" value="Bacteria"/>
</dbReference>
<dbReference type="HOGENOM" id="CLU_057180_1_2_4"/>
<dbReference type="UniPathway" id="UPA00241">
    <property type="reaction ID" value="UER00356"/>
</dbReference>
<dbReference type="Proteomes" id="UP000002676">
    <property type="component" value="Chromosome"/>
</dbReference>
<dbReference type="GO" id="GO:0005737">
    <property type="term" value="C:cytoplasm"/>
    <property type="evidence" value="ECO:0007669"/>
    <property type="project" value="UniProtKB-SubCell"/>
</dbReference>
<dbReference type="GO" id="GO:0005524">
    <property type="term" value="F:ATP binding"/>
    <property type="evidence" value="ECO:0007669"/>
    <property type="project" value="UniProtKB-UniRule"/>
</dbReference>
<dbReference type="GO" id="GO:0004140">
    <property type="term" value="F:dephospho-CoA kinase activity"/>
    <property type="evidence" value="ECO:0007669"/>
    <property type="project" value="UniProtKB-UniRule"/>
</dbReference>
<dbReference type="GO" id="GO:0015937">
    <property type="term" value="P:coenzyme A biosynthetic process"/>
    <property type="evidence" value="ECO:0007669"/>
    <property type="project" value="UniProtKB-UniRule"/>
</dbReference>
<dbReference type="CDD" id="cd02022">
    <property type="entry name" value="DPCK"/>
    <property type="match status" value="1"/>
</dbReference>
<dbReference type="Gene3D" id="3.40.50.300">
    <property type="entry name" value="P-loop containing nucleotide triphosphate hydrolases"/>
    <property type="match status" value="1"/>
</dbReference>
<dbReference type="HAMAP" id="MF_00376">
    <property type="entry name" value="Dephospho_CoA_kinase"/>
    <property type="match status" value="1"/>
</dbReference>
<dbReference type="InterPro" id="IPR001977">
    <property type="entry name" value="Depp_CoAkinase"/>
</dbReference>
<dbReference type="InterPro" id="IPR027417">
    <property type="entry name" value="P-loop_NTPase"/>
</dbReference>
<dbReference type="NCBIfam" id="TIGR00152">
    <property type="entry name" value="dephospho-CoA kinase"/>
    <property type="match status" value="1"/>
</dbReference>
<dbReference type="PANTHER" id="PTHR10695:SF46">
    <property type="entry name" value="BIFUNCTIONAL COENZYME A SYNTHASE-RELATED"/>
    <property type="match status" value="1"/>
</dbReference>
<dbReference type="PANTHER" id="PTHR10695">
    <property type="entry name" value="DEPHOSPHO-COA KINASE-RELATED"/>
    <property type="match status" value="1"/>
</dbReference>
<dbReference type="Pfam" id="PF01121">
    <property type="entry name" value="CoaE"/>
    <property type="match status" value="1"/>
</dbReference>
<dbReference type="SUPFAM" id="SSF52540">
    <property type="entry name" value="P-loop containing nucleoside triphosphate hydrolases"/>
    <property type="match status" value="1"/>
</dbReference>
<dbReference type="PROSITE" id="PS51219">
    <property type="entry name" value="DPCK"/>
    <property type="match status" value="1"/>
</dbReference>
<protein>
    <recommendedName>
        <fullName evidence="1">Dephospho-CoA kinase</fullName>
        <ecNumber evidence="1">2.7.1.24</ecNumber>
    </recommendedName>
    <alternativeName>
        <fullName evidence="1">Dephosphocoenzyme A kinase</fullName>
    </alternativeName>
</protein>
<organism>
    <name type="scientific">Bordetella pertussis (strain Tohama I / ATCC BAA-589 / NCTC 13251)</name>
    <dbReference type="NCBI Taxonomy" id="257313"/>
    <lineage>
        <taxon>Bacteria</taxon>
        <taxon>Pseudomonadati</taxon>
        <taxon>Pseudomonadota</taxon>
        <taxon>Betaproteobacteria</taxon>
        <taxon>Burkholderiales</taxon>
        <taxon>Alcaligenaceae</taxon>
        <taxon>Bordetella</taxon>
    </lineage>
</organism>
<feature type="chain" id="PRO_0000172915" description="Dephospho-CoA kinase">
    <location>
        <begin position="1"/>
        <end position="214"/>
    </location>
</feature>
<feature type="domain" description="DPCK" evidence="1">
    <location>
        <begin position="3"/>
        <end position="202"/>
    </location>
</feature>
<feature type="binding site" evidence="1">
    <location>
        <begin position="11"/>
        <end position="16"/>
    </location>
    <ligand>
        <name>ATP</name>
        <dbReference type="ChEBI" id="CHEBI:30616"/>
    </ligand>
</feature>
<proteinExistence type="inferred from homology"/>
<comment type="function">
    <text evidence="1">Catalyzes the phosphorylation of the 3'-hydroxyl group of dephosphocoenzyme A to form coenzyme A.</text>
</comment>
<comment type="catalytic activity">
    <reaction evidence="1">
        <text>3'-dephospho-CoA + ATP = ADP + CoA + H(+)</text>
        <dbReference type="Rhea" id="RHEA:18245"/>
        <dbReference type="ChEBI" id="CHEBI:15378"/>
        <dbReference type="ChEBI" id="CHEBI:30616"/>
        <dbReference type="ChEBI" id="CHEBI:57287"/>
        <dbReference type="ChEBI" id="CHEBI:57328"/>
        <dbReference type="ChEBI" id="CHEBI:456216"/>
        <dbReference type="EC" id="2.7.1.24"/>
    </reaction>
</comment>
<comment type="pathway">
    <text evidence="1">Cofactor biosynthesis; coenzyme A biosynthesis; CoA from (R)-pantothenate: step 5/5.</text>
</comment>
<comment type="subcellular location">
    <subcellularLocation>
        <location evidence="1">Cytoplasm</location>
    </subcellularLocation>
</comment>
<comment type="similarity">
    <text evidence="1">Belongs to the CoaE family.</text>
</comment>
<gene>
    <name evidence="1" type="primary">coaE</name>
    <name type="ordered locus">BP3817</name>
</gene>
<keyword id="KW-0067">ATP-binding</keyword>
<keyword id="KW-0173">Coenzyme A biosynthesis</keyword>
<keyword id="KW-0963">Cytoplasm</keyword>
<keyword id="KW-0418">Kinase</keyword>
<keyword id="KW-0547">Nucleotide-binding</keyword>
<keyword id="KW-1185">Reference proteome</keyword>
<keyword id="KW-0808">Transferase</keyword>
<sequence>MYKIGLTGGIGSGKSRVADMLAEWGASVIDADEISHALTAPGGAAMPAIAREFGPQAVAADGALDRAWMRDLVFREPTARGRLEALLHPLIGLHTEQAAAQARGLYLVFVVPLLVESGRWRGRVDRICVVDCDPATQIARVQKRSGLTEPAIRRIMAAQAARATRLEAADDVIVNDGATSPDTLRARARTLHDRWLALAGAASQPGGKAAGTPE</sequence>
<accession>Q7VSV5</accession>
<name>COAE_BORPE</name>
<evidence type="ECO:0000255" key="1">
    <source>
        <dbReference type="HAMAP-Rule" id="MF_00376"/>
    </source>
</evidence>